<sequence>MKTAILDLERLPERGEVVINAEGHIAGRLATYIAKALLEKPGLRIVVVNAEKLVVTGDEKMVVEWFKRKISEWGTHYNPEKAGPKIPRRPDRVFKRMVRGMLPKRAESGRRALKRLRVYVSVPMELLSRKRLVVYEVPPAKLRMRPLAKYVTLEEVWRQVDPAAWEQWKKAQELWQKRLKPS</sequence>
<organism>
    <name type="scientific">Pyrobaculum neutrophilum (strain DSM 2338 / JCM 9278 / NBRC 100436 / V24Sta)</name>
    <name type="common">Thermoproteus neutrophilus</name>
    <dbReference type="NCBI Taxonomy" id="444157"/>
    <lineage>
        <taxon>Archaea</taxon>
        <taxon>Thermoproteota</taxon>
        <taxon>Thermoprotei</taxon>
        <taxon>Thermoproteales</taxon>
        <taxon>Thermoproteaceae</taxon>
        <taxon>Pyrobaculum</taxon>
    </lineage>
</organism>
<name>RL13_PYRNV</name>
<comment type="function">
    <text evidence="1">This protein is one of the early assembly proteins of the 50S ribosomal subunit, although it is not seen to bind rRNA by itself. It is important during the early stages of 50S assembly.</text>
</comment>
<comment type="subunit">
    <text evidence="1">Part of the 50S ribosomal subunit.</text>
</comment>
<comment type="similarity">
    <text evidence="1">Belongs to the universal ribosomal protein uL13 family.</text>
</comment>
<reference key="1">
    <citation type="submission" date="2008-03" db="EMBL/GenBank/DDBJ databases">
        <title>Complete sequence of Thermoproteus neutrophilus V24Sta.</title>
        <authorList>
            <consortium name="US DOE Joint Genome Institute"/>
            <person name="Copeland A."/>
            <person name="Lucas S."/>
            <person name="Lapidus A."/>
            <person name="Glavina del Rio T."/>
            <person name="Dalin E."/>
            <person name="Tice H."/>
            <person name="Bruce D."/>
            <person name="Goodwin L."/>
            <person name="Pitluck S."/>
            <person name="Sims D."/>
            <person name="Brettin T."/>
            <person name="Detter J.C."/>
            <person name="Han C."/>
            <person name="Kuske C.R."/>
            <person name="Schmutz J."/>
            <person name="Larimer F."/>
            <person name="Land M."/>
            <person name="Hauser L."/>
            <person name="Kyrpides N."/>
            <person name="Mikhailova N."/>
            <person name="Biddle J.F."/>
            <person name="Zhang Z."/>
            <person name="Fitz-Gibbon S.T."/>
            <person name="Lowe T.M."/>
            <person name="Saltikov C."/>
            <person name="House C.H."/>
            <person name="Richardson P."/>
        </authorList>
    </citation>
    <scope>NUCLEOTIDE SEQUENCE [LARGE SCALE GENOMIC DNA]</scope>
    <source>
        <strain>DSM 2338 / JCM 9278 / NBRC 100436 / V24Sta</strain>
    </source>
</reference>
<gene>
    <name evidence="1" type="primary">rpl13</name>
    <name type="ordered locus">Tneu_1971</name>
</gene>
<accession>B1YC32</accession>
<dbReference type="EMBL" id="CP001014">
    <property type="protein sequence ID" value="ACB40886.1"/>
    <property type="molecule type" value="Genomic_DNA"/>
</dbReference>
<dbReference type="RefSeq" id="WP_012351305.1">
    <property type="nucleotide sequence ID" value="NC_010525.1"/>
</dbReference>
<dbReference type="SMR" id="B1YC32"/>
<dbReference type="STRING" id="444157.Tneu_1971"/>
<dbReference type="GeneID" id="6165958"/>
<dbReference type="KEGG" id="tne:Tneu_1971"/>
<dbReference type="eggNOG" id="arCOG04242">
    <property type="taxonomic scope" value="Archaea"/>
</dbReference>
<dbReference type="HOGENOM" id="CLU_076922_1_0_2"/>
<dbReference type="OrthoDB" id="7668at2157"/>
<dbReference type="Proteomes" id="UP000001694">
    <property type="component" value="Chromosome"/>
</dbReference>
<dbReference type="GO" id="GO:0022625">
    <property type="term" value="C:cytosolic large ribosomal subunit"/>
    <property type="evidence" value="ECO:0007669"/>
    <property type="project" value="TreeGrafter"/>
</dbReference>
<dbReference type="GO" id="GO:0003729">
    <property type="term" value="F:mRNA binding"/>
    <property type="evidence" value="ECO:0007669"/>
    <property type="project" value="TreeGrafter"/>
</dbReference>
<dbReference type="GO" id="GO:0003735">
    <property type="term" value="F:structural constituent of ribosome"/>
    <property type="evidence" value="ECO:0007669"/>
    <property type="project" value="InterPro"/>
</dbReference>
<dbReference type="GO" id="GO:0017148">
    <property type="term" value="P:negative regulation of translation"/>
    <property type="evidence" value="ECO:0007669"/>
    <property type="project" value="TreeGrafter"/>
</dbReference>
<dbReference type="GO" id="GO:0006412">
    <property type="term" value="P:translation"/>
    <property type="evidence" value="ECO:0007669"/>
    <property type="project" value="UniProtKB-UniRule"/>
</dbReference>
<dbReference type="CDD" id="cd00392">
    <property type="entry name" value="Ribosomal_L13"/>
    <property type="match status" value="1"/>
</dbReference>
<dbReference type="Gene3D" id="3.90.1180.10">
    <property type="entry name" value="Ribosomal protein L13"/>
    <property type="match status" value="1"/>
</dbReference>
<dbReference type="HAMAP" id="MF_01366">
    <property type="entry name" value="Ribosomal_uL13"/>
    <property type="match status" value="1"/>
</dbReference>
<dbReference type="InterPro" id="IPR005822">
    <property type="entry name" value="Ribosomal_uL13"/>
</dbReference>
<dbReference type="InterPro" id="IPR005823">
    <property type="entry name" value="Ribosomal_uL13_bac-type"/>
</dbReference>
<dbReference type="InterPro" id="IPR023563">
    <property type="entry name" value="Ribosomal_uL13_CS"/>
</dbReference>
<dbReference type="InterPro" id="IPR005755">
    <property type="entry name" value="Ribosomal_uL13_euk/arc"/>
</dbReference>
<dbReference type="InterPro" id="IPR036899">
    <property type="entry name" value="Ribosomal_uL13_sf"/>
</dbReference>
<dbReference type="NCBIfam" id="TIGR01077">
    <property type="entry name" value="L13_A_E"/>
    <property type="match status" value="1"/>
</dbReference>
<dbReference type="NCBIfam" id="NF005004">
    <property type="entry name" value="PRK06394.1"/>
    <property type="match status" value="1"/>
</dbReference>
<dbReference type="PANTHER" id="PTHR11545:SF3">
    <property type="entry name" value="LARGE RIBOSOMAL SUBUNIT PROTEIN UL13"/>
    <property type="match status" value="1"/>
</dbReference>
<dbReference type="PANTHER" id="PTHR11545">
    <property type="entry name" value="RIBOSOMAL PROTEIN L13"/>
    <property type="match status" value="1"/>
</dbReference>
<dbReference type="Pfam" id="PF00572">
    <property type="entry name" value="Ribosomal_L13"/>
    <property type="match status" value="1"/>
</dbReference>
<dbReference type="PIRSF" id="PIRSF002181">
    <property type="entry name" value="Ribosomal_L13"/>
    <property type="match status" value="1"/>
</dbReference>
<dbReference type="SUPFAM" id="SSF52161">
    <property type="entry name" value="Ribosomal protein L13"/>
    <property type="match status" value="1"/>
</dbReference>
<dbReference type="PROSITE" id="PS00783">
    <property type="entry name" value="RIBOSOMAL_L13"/>
    <property type="match status" value="1"/>
</dbReference>
<evidence type="ECO:0000255" key="1">
    <source>
        <dbReference type="HAMAP-Rule" id="MF_01366"/>
    </source>
</evidence>
<evidence type="ECO:0000305" key="2"/>
<keyword id="KW-0687">Ribonucleoprotein</keyword>
<keyword id="KW-0689">Ribosomal protein</keyword>
<protein>
    <recommendedName>
        <fullName evidence="1">Large ribosomal subunit protein uL13</fullName>
    </recommendedName>
    <alternativeName>
        <fullName evidence="2">50S ribosomal protein L13</fullName>
    </alternativeName>
</protein>
<feature type="chain" id="PRO_1000144189" description="Large ribosomal subunit protein uL13">
    <location>
        <begin position="1"/>
        <end position="182"/>
    </location>
</feature>
<proteinExistence type="inferred from homology"/>